<gene>
    <name type="primary">Ap1m2</name>
</gene>
<evidence type="ECO:0000250" key="1"/>
<evidence type="ECO:0000250" key="2">
    <source>
        <dbReference type="UniProtKB" id="D3ZRP6"/>
    </source>
</evidence>
<evidence type="ECO:0000255" key="3">
    <source>
        <dbReference type="PROSITE-ProRule" id="PRU00404"/>
    </source>
</evidence>
<evidence type="ECO:0000269" key="4">
    <source>
    </source>
</evidence>
<evidence type="ECO:0000303" key="5">
    <source>
    </source>
</evidence>
<evidence type="ECO:0000305" key="6"/>
<sequence>MSASAVFILDVKGKPLISRNYKGDVPMTEIDHFMPLLMQREEEGVLAPLLSHGRVHFLWIKHSNLYLVATTLKNANASLVYSFLYKTVEVFCEYFKELEEESIRDNFVIVYDLLDELMDFGFPQTTDSKILQEYITQQGNKLETGKSRVPPTVTNAVSWRSEGIKYKKNEVFIDVIESVNLLVNANGSVLLSEIVGTIKLKVFLSGMPELRLGLNDRVLFELTGRSKNKSVELEDVKFHQCVRLSRFDNDRTISFIPPDGDFELMSYRLSTQVKPLIWIESVIEKFSHSRVEIMVKAKGQFKKQSVANGVEISVPVPSDADSPRFKTSVGSAKYVPEKNVVIWSIKSFPGGKEYLMRAHFGLPSVETEEVEGRPPIGVKFEIPYFTVSGIQVRYMKIIEKSGYQALPWVRYITQSGDYQLRTS</sequence>
<feature type="chain" id="PRO_0000193773" description="AP-1 complex subunit mu-2">
    <location>
        <begin position="1"/>
        <end position="423"/>
    </location>
</feature>
<feature type="domain" description="MHD" evidence="3">
    <location>
        <begin position="168"/>
        <end position="421"/>
    </location>
</feature>
<feature type="splice variant" id="VSP_000170" description="In isoform 2." evidence="5">
    <original>R</original>
    <variation>LSG</variation>
    <location>
        <position position="225"/>
    </location>
</feature>
<feature type="sequence conflict" description="In Ref. 3; BAB26971 and 4; AAH03704." evidence="6" ref="3 4">
    <original>D</original>
    <variation>E</variation>
    <location>
        <position position="112"/>
    </location>
</feature>
<dbReference type="EMBL" id="AF067146">
    <property type="protein sequence ID" value="AAD28085.1"/>
    <property type="molecule type" value="mRNA"/>
</dbReference>
<dbReference type="EMBL" id="AF139416">
    <property type="protein sequence ID" value="AAF61815.1"/>
    <property type="molecule type" value="Genomic_DNA"/>
</dbReference>
<dbReference type="EMBL" id="AF139406">
    <property type="protein sequence ID" value="AAF61815.1"/>
    <property type="status" value="JOINED"/>
    <property type="molecule type" value="Genomic_DNA"/>
</dbReference>
<dbReference type="EMBL" id="AF139407">
    <property type="protein sequence ID" value="AAF61815.1"/>
    <property type="status" value="JOINED"/>
    <property type="molecule type" value="Genomic_DNA"/>
</dbReference>
<dbReference type="EMBL" id="AF139408">
    <property type="protein sequence ID" value="AAF61815.1"/>
    <property type="status" value="JOINED"/>
    <property type="molecule type" value="Genomic_DNA"/>
</dbReference>
<dbReference type="EMBL" id="AF139409">
    <property type="protein sequence ID" value="AAF61815.1"/>
    <property type="status" value="JOINED"/>
    <property type="molecule type" value="Genomic_DNA"/>
</dbReference>
<dbReference type="EMBL" id="AF139410">
    <property type="protein sequence ID" value="AAF61815.1"/>
    <property type="status" value="JOINED"/>
    <property type="molecule type" value="Genomic_DNA"/>
</dbReference>
<dbReference type="EMBL" id="AF139411">
    <property type="protein sequence ID" value="AAF61815.1"/>
    <property type="status" value="JOINED"/>
    <property type="molecule type" value="Genomic_DNA"/>
</dbReference>
<dbReference type="EMBL" id="AF139412">
    <property type="protein sequence ID" value="AAF61815.1"/>
    <property type="status" value="JOINED"/>
    <property type="molecule type" value="Genomic_DNA"/>
</dbReference>
<dbReference type="EMBL" id="AF139413">
    <property type="protein sequence ID" value="AAF61815.1"/>
    <property type="status" value="JOINED"/>
    <property type="molecule type" value="Genomic_DNA"/>
</dbReference>
<dbReference type="EMBL" id="AF139414">
    <property type="protein sequence ID" value="AAF61815.1"/>
    <property type="status" value="JOINED"/>
    <property type="molecule type" value="Genomic_DNA"/>
</dbReference>
<dbReference type="EMBL" id="AF139415">
    <property type="protein sequence ID" value="AAF61815.1"/>
    <property type="status" value="JOINED"/>
    <property type="molecule type" value="Genomic_DNA"/>
</dbReference>
<dbReference type="EMBL" id="AK010478">
    <property type="protein sequence ID" value="BAB26971.1"/>
    <property type="molecule type" value="mRNA"/>
</dbReference>
<dbReference type="EMBL" id="BC003704">
    <property type="protein sequence ID" value="AAH03704.1"/>
    <property type="molecule type" value="mRNA"/>
</dbReference>
<dbReference type="CCDS" id="CCDS22902.1">
    <molecule id="Q9WVP1-1"/>
</dbReference>
<dbReference type="CCDS" id="CCDS52734.1">
    <molecule id="Q9WVP1-2"/>
</dbReference>
<dbReference type="RefSeq" id="NP_001103770.1">
    <property type="nucleotide sequence ID" value="NM_001110300.1"/>
</dbReference>
<dbReference type="RefSeq" id="NP_033808.2">
    <property type="nucleotide sequence ID" value="NM_009678.2"/>
</dbReference>
<dbReference type="SMR" id="Q9WVP1"/>
<dbReference type="ComplexPortal" id="CPX-5144">
    <property type="entry name" value="Endothelial AP-1 Adaptor complex, sigma1a variant"/>
</dbReference>
<dbReference type="FunCoup" id="Q9WVP1">
    <property type="interactions" value="426"/>
</dbReference>
<dbReference type="STRING" id="10090.ENSMUSP00000111093"/>
<dbReference type="iPTMnet" id="Q9WVP1"/>
<dbReference type="PhosphoSitePlus" id="Q9WVP1"/>
<dbReference type="jPOST" id="Q9WVP1"/>
<dbReference type="PaxDb" id="10090-ENSMUSP00000111093"/>
<dbReference type="PeptideAtlas" id="Q9WVP1"/>
<dbReference type="ProteomicsDB" id="296323">
    <molecule id="Q9WVP1-1"/>
</dbReference>
<dbReference type="ProteomicsDB" id="296324">
    <molecule id="Q9WVP1-2"/>
</dbReference>
<dbReference type="DNASU" id="11768"/>
<dbReference type="GeneID" id="11768"/>
<dbReference type="KEGG" id="mmu:11768"/>
<dbReference type="UCSC" id="uc009okx.2">
    <molecule id="Q9WVP1-1"/>
    <property type="organism name" value="mouse"/>
</dbReference>
<dbReference type="UCSC" id="uc009oky.2">
    <molecule id="Q9WVP1-2"/>
    <property type="organism name" value="mouse"/>
</dbReference>
<dbReference type="AGR" id="MGI:1336974"/>
<dbReference type="CTD" id="10053"/>
<dbReference type="MGI" id="MGI:1336974">
    <property type="gene designation" value="Ap1m2"/>
</dbReference>
<dbReference type="eggNOG" id="KOG0937">
    <property type="taxonomic scope" value="Eukaryota"/>
</dbReference>
<dbReference type="InParanoid" id="Q9WVP1"/>
<dbReference type="OrthoDB" id="10259133at2759"/>
<dbReference type="PhylomeDB" id="Q9WVP1"/>
<dbReference type="TreeFam" id="TF300393"/>
<dbReference type="Reactome" id="R-MMU-2132295">
    <property type="pathway name" value="MHC class II antigen presentation"/>
</dbReference>
<dbReference type="Reactome" id="R-MMU-432720">
    <property type="pathway name" value="Lysosome Vesicle Biogenesis"/>
</dbReference>
<dbReference type="Reactome" id="R-MMU-432722">
    <property type="pathway name" value="Golgi Associated Vesicle Biogenesis"/>
</dbReference>
<dbReference type="BioGRID-ORCS" id="11768">
    <property type="hits" value="4 hits in 78 CRISPR screens"/>
</dbReference>
<dbReference type="ChiTaRS" id="Ap1m2">
    <property type="organism name" value="mouse"/>
</dbReference>
<dbReference type="PRO" id="PR:Q9WVP1"/>
<dbReference type="Proteomes" id="UP000000589">
    <property type="component" value="Unplaced"/>
</dbReference>
<dbReference type="RNAct" id="Q9WVP1">
    <property type="molecule type" value="protein"/>
</dbReference>
<dbReference type="GO" id="GO:0030121">
    <property type="term" value="C:AP-1 adaptor complex"/>
    <property type="evidence" value="ECO:0000303"/>
    <property type="project" value="ComplexPortal"/>
</dbReference>
<dbReference type="GO" id="GO:0005802">
    <property type="term" value="C:trans-Golgi network"/>
    <property type="evidence" value="ECO:0000304"/>
    <property type="project" value="MGI"/>
</dbReference>
<dbReference type="GO" id="GO:0032588">
    <property type="term" value="C:trans-Golgi network membrane"/>
    <property type="evidence" value="ECO:0000303"/>
    <property type="project" value="ComplexPortal"/>
</dbReference>
<dbReference type="GO" id="GO:0110010">
    <property type="term" value="P:basolateral protein secretion"/>
    <property type="evidence" value="ECO:0000303"/>
    <property type="project" value="ComplexPortal"/>
</dbReference>
<dbReference type="GO" id="GO:0006886">
    <property type="term" value="P:intracellular protein transport"/>
    <property type="evidence" value="ECO:0000304"/>
    <property type="project" value="MGI"/>
</dbReference>
<dbReference type="GO" id="GO:0016192">
    <property type="term" value="P:vesicle-mediated transport"/>
    <property type="evidence" value="ECO:0000304"/>
    <property type="project" value="MGI"/>
</dbReference>
<dbReference type="CDD" id="cd14835">
    <property type="entry name" value="AP1_Mu_N"/>
    <property type="match status" value="1"/>
</dbReference>
<dbReference type="FunFam" id="2.60.40.1170:FF:000002">
    <property type="entry name" value="AP-1 complex subunit mu-1 isoform 1"/>
    <property type="match status" value="1"/>
</dbReference>
<dbReference type="FunFam" id="3.30.450.60:FF:000006">
    <property type="entry name" value="AP-1 complex subunit mu-1 isoform 1"/>
    <property type="match status" value="1"/>
</dbReference>
<dbReference type="FunFam" id="2.60.40.1170:FF:000046">
    <property type="entry name" value="AP-1 complex subunit mu-2"/>
    <property type="match status" value="1"/>
</dbReference>
<dbReference type="Gene3D" id="3.30.450.60">
    <property type="match status" value="1"/>
</dbReference>
<dbReference type="Gene3D" id="2.60.40.1170">
    <property type="entry name" value="Mu homology domain, subdomain B"/>
    <property type="match status" value="2"/>
</dbReference>
<dbReference type="InterPro" id="IPR050431">
    <property type="entry name" value="Adaptor_comp_med_subunit"/>
</dbReference>
<dbReference type="InterPro" id="IPR036168">
    <property type="entry name" value="AP2_Mu_C_sf"/>
</dbReference>
<dbReference type="InterPro" id="IPR022775">
    <property type="entry name" value="AP_mu_sigma_su"/>
</dbReference>
<dbReference type="InterPro" id="IPR001392">
    <property type="entry name" value="Clathrin_mu"/>
</dbReference>
<dbReference type="InterPro" id="IPR018240">
    <property type="entry name" value="Clathrin_mu_CS"/>
</dbReference>
<dbReference type="InterPro" id="IPR011012">
    <property type="entry name" value="Longin-like_dom_sf"/>
</dbReference>
<dbReference type="InterPro" id="IPR028565">
    <property type="entry name" value="MHD"/>
</dbReference>
<dbReference type="PANTHER" id="PTHR10529">
    <property type="entry name" value="AP COMPLEX SUBUNIT MU"/>
    <property type="match status" value="1"/>
</dbReference>
<dbReference type="Pfam" id="PF00928">
    <property type="entry name" value="Adap_comp_sub"/>
    <property type="match status" value="1"/>
</dbReference>
<dbReference type="Pfam" id="PF01217">
    <property type="entry name" value="Clat_adaptor_s"/>
    <property type="match status" value="1"/>
</dbReference>
<dbReference type="PIRSF" id="PIRSF005992">
    <property type="entry name" value="Clathrin_mu"/>
    <property type="match status" value="1"/>
</dbReference>
<dbReference type="PRINTS" id="PR00314">
    <property type="entry name" value="CLATHRINADPT"/>
</dbReference>
<dbReference type="SUPFAM" id="SSF49447">
    <property type="entry name" value="Second domain of Mu2 adaptin subunit (ap50) of ap2 adaptor"/>
    <property type="match status" value="1"/>
</dbReference>
<dbReference type="SUPFAM" id="SSF64356">
    <property type="entry name" value="SNARE-like"/>
    <property type="match status" value="1"/>
</dbReference>
<dbReference type="PROSITE" id="PS00990">
    <property type="entry name" value="CLAT_ADAPTOR_M_1"/>
    <property type="match status" value="1"/>
</dbReference>
<dbReference type="PROSITE" id="PS00991">
    <property type="entry name" value="CLAT_ADAPTOR_M_2"/>
    <property type="match status" value="1"/>
</dbReference>
<dbReference type="PROSITE" id="PS51072">
    <property type="entry name" value="MHD"/>
    <property type="match status" value="1"/>
</dbReference>
<reference key="1">
    <citation type="journal article" date="1999" name="FEBS Lett.">
        <title>Mu1B, a novel adaptor medium chain expressed in polarized epithelial cells.</title>
        <authorList>
            <person name="Ohno H."/>
            <person name="Tomemori T."/>
            <person name="Nakatsu F."/>
            <person name="Okazaki Y."/>
            <person name="Aguilar R.C."/>
            <person name="Foelsch H."/>
            <person name="Mellman I."/>
            <person name="Saito T."/>
            <person name="Shirasawa T."/>
            <person name="Bonifacino J.S."/>
        </authorList>
    </citation>
    <scope>NUCLEOTIDE SEQUENCE [MRNA] (ISOFORM 1)</scope>
    <source>
        <strain>C57BL/6J</strain>
    </source>
</reference>
<reference key="2">
    <citation type="journal article" date="1999" name="Cytogenet. Cell Genet.">
        <title>Genomic structure and chromosome mapping of the genes encoding clathrin-associated adaptor medium chains mu1A (Ap1m1) and mu1B (Ap1m2).</title>
        <authorList>
            <person name="Nakatsu F."/>
            <person name="Kadohira T."/>
            <person name="Gilbert D.J."/>
            <person name="Jenkins N.A."/>
            <person name="Kakuta H."/>
            <person name="Copeland N.G."/>
            <person name="Saito T."/>
            <person name="Ohno H."/>
        </authorList>
    </citation>
    <scope>NUCLEOTIDE SEQUENCE [GENOMIC DNA] (ISOFORM 1)</scope>
</reference>
<reference key="3">
    <citation type="journal article" date="2005" name="Science">
        <title>The transcriptional landscape of the mammalian genome.</title>
        <authorList>
            <person name="Carninci P."/>
            <person name="Kasukawa T."/>
            <person name="Katayama S."/>
            <person name="Gough J."/>
            <person name="Frith M.C."/>
            <person name="Maeda N."/>
            <person name="Oyama R."/>
            <person name="Ravasi T."/>
            <person name="Lenhard B."/>
            <person name="Wells C."/>
            <person name="Kodzius R."/>
            <person name="Shimokawa K."/>
            <person name="Bajic V.B."/>
            <person name="Brenner S.E."/>
            <person name="Batalov S."/>
            <person name="Forrest A.R."/>
            <person name="Zavolan M."/>
            <person name="Davis M.J."/>
            <person name="Wilming L.G."/>
            <person name="Aidinis V."/>
            <person name="Allen J.E."/>
            <person name="Ambesi-Impiombato A."/>
            <person name="Apweiler R."/>
            <person name="Aturaliya R.N."/>
            <person name="Bailey T.L."/>
            <person name="Bansal M."/>
            <person name="Baxter L."/>
            <person name="Beisel K.W."/>
            <person name="Bersano T."/>
            <person name="Bono H."/>
            <person name="Chalk A.M."/>
            <person name="Chiu K.P."/>
            <person name="Choudhary V."/>
            <person name="Christoffels A."/>
            <person name="Clutterbuck D.R."/>
            <person name="Crowe M.L."/>
            <person name="Dalla E."/>
            <person name="Dalrymple B.P."/>
            <person name="de Bono B."/>
            <person name="Della Gatta G."/>
            <person name="di Bernardo D."/>
            <person name="Down T."/>
            <person name="Engstrom P."/>
            <person name="Fagiolini M."/>
            <person name="Faulkner G."/>
            <person name="Fletcher C.F."/>
            <person name="Fukushima T."/>
            <person name="Furuno M."/>
            <person name="Futaki S."/>
            <person name="Gariboldi M."/>
            <person name="Georgii-Hemming P."/>
            <person name="Gingeras T.R."/>
            <person name="Gojobori T."/>
            <person name="Green R.E."/>
            <person name="Gustincich S."/>
            <person name="Harbers M."/>
            <person name="Hayashi Y."/>
            <person name="Hensch T.K."/>
            <person name="Hirokawa N."/>
            <person name="Hill D."/>
            <person name="Huminiecki L."/>
            <person name="Iacono M."/>
            <person name="Ikeo K."/>
            <person name="Iwama A."/>
            <person name="Ishikawa T."/>
            <person name="Jakt M."/>
            <person name="Kanapin A."/>
            <person name="Katoh M."/>
            <person name="Kawasawa Y."/>
            <person name="Kelso J."/>
            <person name="Kitamura H."/>
            <person name="Kitano H."/>
            <person name="Kollias G."/>
            <person name="Krishnan S.P."/>
            <person name="Kruger A."/>
            <person name="Kummerfeld S.K."/>
            <person name="Kurochkin I.V."/>
            <person name="Lareau L.F."/>
            <person name="Lazarevic D."/>
            <person name="Lipovich L."/>
            <person name="Liu J."/>
            <person name="Liuni S."/>
            <person name="McWilliam S."/>
            <person name="Madan Babu M."/>
            <person name="Madera M."/>
            <person name="Marchionni L."/>
            <person name="Matsuda H."/>
            <person name="Matsuzawa S."/>
            <person name="Miki H."/>
            <person name="Mignone F."/>
            <person name="Miyake S."/>
            <person name="Morris K."/>
            <person name="Mottagui-Tabar S."/>
            <person name="Mulder N."/>
            <person name="Nakano N."/>
            <person name="Nakauchi H."/>
            <person name="Ng P."/>
            <person name="Nilsson R."/>
            <person name="Nishiguchi S."/>
            <person name="Nishikawa S."/>
            <person name="Nori F."/>
            <person name="Ohara O."/>
            <person name="Okazaki Y."/>
            <person name="Orlando V."/>
            <person name="Pang K.C."/>
            <person name="Pavan W.J."/>
            <person name="Pavesi G."/>
            <person name="Pesole G."/>
            <person name="Petrovsky N."/>
            <person name="Piazza S."/>
            <person name="Reed J."/>
            <person name="Reid J.F."/>
            <person name="Ring B.Z."/>
            <person name="Ringwald M."/>
            <person name="Rost B."/>
            <person name="Ruan Y."/>
            <person name="Salzberg S.L."/>
            <person name="Sandelin A."/>
            <person name="Schneider C."/>
            <person name="Schoenbach C."/>
            <person name="Sekiguchi K."/>
            <person name="Semple C.A."/>
            <person name="Seno S."/>
            <person name="Sessa L."/>
            <person name="Sheng Y."/>
            <person name="Shibata Y."/>
            <person name="Shimada H."/>
            <person name="Shimada K."/>
            <person name="Silva D."/>
            <person name="Sinclair B."/>
            <person name="Sperling S."/>
            <person name="Stupka E."/>
            <person name="Sugiura K."/>
            <person name="Sultana R."/>
            <person name="Takenaka Y."/>
            <person name="Taki K."/>
            <person name="Tammoja K."/>
            <person name="Tan S.L."/>
            <person name="Tang S."/>
            <person name="Taylor M.S."/>
            <person name="Tegner J."/>
            <person name="Teichmann S.A."/>
            <person name="Ueda H.R."/>
            <person name="van Nimwegen E."/>
            <person name="Verardo R."/>
            <person name="Wei C.L."/>
            <person name="Yagi K."/>
            <person name="Yamanishi H."/>
            <person name="Zabarovsky E."/>
            <person name="Zhu S."/>
            <person name="Zimmer A."/>
            <person name="Hide W."/>
            <person name="Bult C."/>
            <person name="Grimmond S.M."/>
            <person name="Teasdale R.D."/>
            <person name="Liu E.T."/>
            <person name="Brusic V."/>
            <person name="Quackenbush J."/>
            <person name="Wahlestedt C."/>
            <person name="Mattick J.S."/>
            <person name="Hume D.A."/>
            <person name="Kai C."/>
            <person name="Sasaki D."/>
            <person name="Tomaru Y."/>
            <person name="Fukuda S."/>
            <person name="Kanamori-Katayama M."/>
            <person name="Suzuki M."/>
            <person name="Aoki J."/>
            <person name="Arakawa T."/>
            <person name="Iida J."/>
            <person name="Imamura K."/>
            <person name="Itoh M."/>
            <person name="Kato T."/>
            <person name="Kawaji H."/>
            <person name="Kawagashira N."/>
            <person name="Kawashima T."/>
            <person name="Kojima M."/>
            <person name="Kondo S."/>
            <person name="Konno H."/>
            <person name="Nakano K."/>
            <person name="Ninomiya N."/>
            <person name="Nishio T."/>
            <person name="Okada M."/>
            <person name="Plessy C."/>
            <person name="Shibata K."/>
            <person name="Shiraki T."/>
            <person name="Suzuki S."/>
            <person name="Tagami M."/>
            <person name="Waki K."/>
            <person name="Watahiki A."/>
            <person name="Okamura-Oho Y."/>
            <person name="Suzuki H."/>
            <person name="Kawai J."/>
            <person name="Hayashizaki Y."/>
        </authorList>
    </citation>
    <scope>NUCLEOTIDE SEQUENCE [LARGE SCALE MRNA] (ISOFORM 2)</scope>
    <source>
        <strain>C57BL/6J</strain>
        <tissue>Embryonic stem cell</tissue>
    </source>
</reference>
<reference key="4">
    <citation type="journal article" date="2004" name="Genome Res.">
        <title>The status, quality, and expansion of the NIH full-length cDNA project: the Mammalian Gene Collection (MGC).</title>
        <authorList>
            <consortium name="The MGC Project Team"/>
        </authorList>
    </citation>
    <scope>NUCLEOTIDE SEQUENCE [LARGE SCALE MRNA] (ISOFORM 1)</scope>
    <source>
        <tissue>Mammary gland</tissue>
    </source>
</reference>
<reference key="5">
    <citation type="journal article" date="2002" name="EMBO Rep.">
        <title>The polarized epithelia-specific mu 1B-adaptin complements mu 1A-deficiency in fibroblasts.</title>
        <authorList>
            <person name="Eskelinen E.L."/>
            <person name="Meyer C."/>
            <person name="Ohno H."/>
            <person name="von Figura K."/>
            <person name="Schu P."/>
        </authorList>
    </citation>
    <scope>IDENTIFICATION IN THE AP-1 COMPLEX</scope>
</reference>
<reference key="6">
    <citation type="journal article" date="2010" name="Cell">
        <title>A tissue-specific atlas of mouse protein phosphorylation and expression.</title>
        <authorList>
            <person name="Huttlin E.L."/>
            <person name="Jedrychowski M.P."/>
            <person name="Elias J.E."/>
            <person name="Goswami T."/>
            <person name="Rad R."/>
            <person name="Beausoleil S.A."/>
            <person name="Villen J."/>
            <person name="Haas W."/>
            <person name="Sowa M.E."/>
            <person name="Gygi S.P."/>
        </authorList>
    </citation>
    <scope>IDENTIFICATION BY MASS SPECTROMETRY [LARGE SCALE ANALYSIS]</scope>
    <source>
        <tissue>Lung</tissue>
        <tissue>Pancreas</tissue>
    </source>
</reference>
<keyword id="KW-0025">Alternative splicing</keyword>
<keyword id="KW-0968">Cytoplasmic vesicle</keyword>
<keyword id="KW-0333">Golgi apparatus</keyword>
<keyword id="KW-0472">Membrane</keyword>
<keyword id="KW-0597">Phosphoprotein</keyword>
<keyword id="KW-0653">Protein transport</keyword>
<keyword id="KW-1185">Reference proteome</keyword>
<keyword id="KW-0813">Transport</keyword>
<organism>
    <name type="scientific">Mus musculus</name>
    <name type="common">Mouse</name>
    <dbReference type="NCBI Taxonomy" id="10090"/>
    <lineage>
        <taxon>Eukaryota</taxon>
        <taxon>Metazoa</taxon>
        <taxon>Chordata</taxon>
        <taxon>Craniata</taxon>
        <taxon>Vertebrata</taxon>
        <taxon>Euteleostomi</taxon>
        <taxon>Mammalia</taxon>
        <taxon>Eutheria</taxon>
        <taxon>Euarchontoglires</taxon>
        <taxon>Glires</taxon>
        <taxon>Rodentia</taxon>
        <taxon>Myomorpha</taxon>
        <taxon>Muroidea</taxon>
        <taxon>Muridae</taxon>
        <taxon>Murinae</taxon>
        <taxon>Mus</taxon>
        <taxon>Mus</taxon>
    </lineage>
</organism>
<name>AP1M2_MOUSE</name>
<comment type="function">
    <text>Subunit of clathrin-associated adaptor protein complex 1 that plays a role in protein sorting in the trans-Golgi network (TGN) and endosomes. The AP complexes mediate the recruitment of clathrin to membranes and the recognition of sorting signals within the cytosolic tails of transmembrane cargo molecules.</text>
</comment>
<comment type="subunit">
    <text evidence="2 4">Adaptor protein complex 1 (AP-1) is a heterotetramer composed of two large adaptins (gamma-type subunit AP1G1 and beta-type subunit AP1B1), a medium adaptin (mu-type subunit AP1M1 or AP1M2) and a small adaptin (sigma-type subunit AP1S1 or AP1S2 or AP1S3). Interacts with P2X4 (By similarity).</text>
</comment>
<comment type="subcellular location">
    <subcellularLocation>
        <location>Golgi apparatus</location>
    </subcellularLocation>
    <subcellularLocation>
        <location>Cytoplasmic vesicle</location>
        <location>Clathrin-coated vesicle membrane</location>
        <topology>Peripheral membrane protein</topology>
        <orientation>Cytoplasmic side</orientation>
    </subcellularLocation>
    <text>Component of the coat surrounding the cytoplasmic face of coated vesicles located at the Golgi complex.</text>
</comment>
<comment type="alternative products">
    <event type="alternative splicing"/>
    <isoform>
        <id>Q9WVP1-1</id>
        <name>1</name>
        <sequence type="displayed"/>
    </isoform>
    <isoform>
        <id>Q9WVP1-2</id>
        <name>2</name>
        <sequence type="described" ref="VSP_000170"/>
    </isoform>
</comment>
<comment type="PTM">
    <text evidence="1">Phosphorylation of membrane-bound AP1M1/AP1M2 increases its affinity for sorting signals.</text>
</comment>
<comment type="similarity">
    <text evidence="6">Belongs to the adaptor complexes medium subunit family.</text>
</comment>
<protein>
    <recommendedName>
        <fullName>AP-1 complex subunit mu-2</fullName>
    </recommendedName>
    <alternativeName>
        <fullName>AP-mu chain family member mu1B</fullName>
    </alternativeName>
    <alternativeName>
        <fullName>Adaptor protein complex AP-1 subunit mu-2</fullName>
    </alternativeName>
    <alternativeName>
        <fullName>Adaptor-related protein complex 1 subunit mu-2</fullName>
    </alternativeName>
    <alternativeName>
        <fullName>Clathrin assembly protein complex 1 mu-2 medium chain 2</fullName>
    </alternativeName>
    <alternativeName>
        <fullName>Golgi adaptor HA1/AP1 adaptin mu-2 subunit</fullName>
    </alternativeName>
    <alternativeName>
        <fullName>Mu-adaptin 2</fullName>
    </alternativeName>
    <alternativeName>
        <fullName>Mu1B-adaptin</fullName>
    </alternativeName>
</protein>
<proteinExistence type="evidence at protein level"/>
<accession>Q9WVP1</accession>
<accession>Q99LA4</accession>
<accession>Q9CWP7</accession>